<sequence length="57" mass="6321">GQQPLCNDCFACARSLCICGDLVPQCHEGCQQCEKVDTLSGKPLYQCRSFEDYQCAN</sequence>
<keyword id="KW-0903">Direct protein sequencing</keyword>
<keyword id="KW-1015">Disulfide bond</keyword>
<keyword id="KW-0646">Protease inhibitor</keyword>
<keyword id="KW-0722">Serine protease inhibitor</keyword>
<evidence type="ECO:0000250" key="1">
    <source>
        <dbReference type="UniProtKB" id="P80321"/>
    </source>
</evidence>
<evidence type="ECO:0000269" key="2">
    <source>
    </source>
</evidence>
<evidence type="ECO:0000303" key="3">
    <source>
    </source>
</evidence>
<evidence type="ECO:0000305" key="4"/>
<feature type="chain" id="PRO_0000452980" description="Bowman-Birk type proteinase inhibitor B4">
    <location>
        <begin position="1"/>
        <end position="57"/>
    </location>
</feature>
<feature type="site" description="Reactive bond for trypsin" evidence="1">
    <location>
        <begin position="14"/>
        <end position="15"/>
    </location>
</feature>
<feature type="disulfide bond" evidence="1">
    <location>
        <begin position="6"/>
        <end position="55"/>
    </location>
</feature>
<feature type="disulfide bond" evidence="1">
    <location>
        <begin position="12"/>
        <end position="17"/>
    </location>
</feature>
<feature type="disulfide bond" evidence="1">
    <location>
        <begin position="26"/>
        <end position="33"/>
    </location>
</feature>
<feature type="disulfide bond" evidence="1">
    <location>
        <begin position="30"/>
        <end position="47"/>
    </location>
</feature>
<proteinExistence type="evidence at protein level"/>
<reference key="1">
    <citation type="journal article" date="2021" name="Biochem. J.">
        <title>Isolation and functional diversity of Bowman-Birk type serine proteinase inhibitors from Hyacinthus orientalis.</title>
        <authorList>
            <person name="Aoki-Shioi N."/>
            <person name="Terada S."/>
            <person name="Hellinger R."/>
            <person name="Furuta Y."/>
            <person name="Gruber C.W."/>
        </authorList>
    </citation>
    <scope>PROTEIN SEQUENCE</scope>
    <scope>FUNCTION</scope>
    <scope>TISSUE SPECIFICITY</scope>
    <source>
        <tissue evidence="3">Bulb</tissue>
    </source>
</reference>
<dbReference type="SMR" id="C0HLT0"/>
<dbReference type="GO" id="GO:0005576">
    <property type="term" value="C:extracellular region"/>
    <property type="evidence" value="ECO:0007669"/>
    <property type="project" value="InterPro"/>
</dbReference>
<dbReference type="GO" id="GO:0004867">
    <property type="term" value="F:serine-type endopeptidase inhibitor activity"/>
    <property type="evidence" value="ECO:0000314"/>
    <property type="project" value="UniProtKB"/>
</dbReference>
<dbReference type="GO" id="GO:0010951">
    <property type="term" value="P:negative regulation of endopeptidase activity"/>
    <property type="evidence" value="ECO:0000314"/>
    <property type="project" value="UniProtKB"/>
</dbReference>
<dbReference type="Gene3D" id="2.10.69.10">
    <property type="entry name" value="Cysteine Protease (Bromelain) Inhibitor, subunit H"/>
    <property type="match status" value="1"/>
</dbReference>
<dbReference type="InterPro" id="IPR035995">
    <property type="entry name" value="Bowman-Birk_prot_inh"/>
</dbReference>
<protein>
    <recommendedName>
        <fullName evidence="3">Bowman-Birk type proteinase inhibitor B4</fullName>
        <shortName evidence="3">HOSPI-B4</shortName>
    </recommendedName>
</protein>
<name>IBBB4_HYAOR</name>
<comment type="function">
    <text evidence="2">Serine protease inhibitor (PubMed:33666645). Inhibits trypsin (Ki = 110 nM) and very weakly inhibits chymotrypsin (Ki =1200 nM) (PubMed:33666645). Does not inhibit bacterial subtilisin (PubMed:33666645).</text>
</comment>
<comment type="tissue specificity">
    <text evidence="2">Expressed in bulb (at protein level).</text>
</comment>
<comment type="similarity">
    <text evidence="4">Belongs to the Bowman-Birk serine protease inhibitor family.</text>
</comment>
<accession>C0HLT0</accession>
<organism>
    <name type="scientific">Hyacinthus orientalis</name>
    <name type="common">Common hyacinth</name>
    <dbReference type="NCBI Taxonomy" id="82025"/>
    <lineage>
        <taxon>Eukaryota</taxon>
        <taxon>Viridiplantae</taxon>
        <taxon>Streptophyta</taxon>
        <taxon>Embryophyta</taxon>
        <taxon>Tracheophyta</taxon>
        <taxon>Spermatophyta</taxon>
        <taxon>Magnoliopsida</taxon>
        <taxon>Liliopsida</taxon>
        <taxon>Asparagales</taxon>
        <taxon>Hyacinthaceae</taxon>
        <taxon>Hyacinthoideae</taxon>
        <taxon>Hyacintheae</taxon>
        <taxon>Hyacinthus</taxon>
    </lineage>
</organism>